<name>THIM_LEVBA</name>
<organism>
    <name type="scientific">Levilactobacillus brevis (strain ATCC 367 / BCRC 12310 / CIP 105137 / JCM 1170 / LMG 11437 / NCIMB 947 / NCTC 947)</name>
    <name type="common">Lactobacillus brevis</name>
    <dbReference type="NCBI Taxonomy" id="387344"/>
    <lineage>
        <taxon>Bacteria</taxon>
        <taxon>Bacillati</taxon>
        <taxon>Bacillota</taxon>
        <taxon>Bacilli</taxon>
        <taxon>Lactobacillales</taxon>
        <taxon>Lactobacillaceae</taxon>
        <taxon>Levilactobacillus</taxon>
    </lineage>
</organism>
<dbReference type="EC" id="2.7.1.50" evidence="1"/>
<dbReference type="EMBL" id="CP000416">
    <property type="protein sequence ID" value="ABJ65153.1"/>
    <property type="molecule type" value="Genomic_DNA"/>
</dbReference>
<dbReference type="RefSeq" id="WP_011668876.1">
    <property type="nucleotide sequence ID" value="NC_008497.1"/>
</dbReference>
<dbReference type="SMR" id="Q03NR9"/>
<dbReference type="STRING" id="387344.LVIS_2099"/>
<dbReference type="GeneID" id="56993980"/>
<dbReference type="KEGG" id="lbr:LVIS_2099"/>
<dbReference type="eggNOG" id="COG2145">
    <property type="taxonomic scope" value="Bacteria"/>
</dbReference>
<dbReference type="HOGENOM" id="CLU_019943_0_1_9"/>
<dbReference type="UniPathway" id="UPA00060">
    <property type="reaction ID" value="UER00139"/>
</dbReference>
<dbReference type="Proteomes" id="UP000001652">
    <property type="component" value="Chromosome"/>
</dbReference>
<dbReference type="GO" id="GO:0005524">
    <property type="term" value="F:ATP binding"/>
    <property type="evidence" value="ECO:0007669"/>
    <property type="project" value="UniProtKB-UniRule"/>
</dbReference>
<dbReference type="GO" id="GO:0004417">
    <property type="term" value="F:hydroxyethylthiazole kinase activity"/>
    <property type="evidence" value="ECO:0007669"/>
    <property type="project" value="UniProtKB-UniRule"/>
</dbReference>
<dbReference type="GO" id="GO:0000287">
    <property type="term" value="F:magnesium ion binding"/>
    <property type="evidence" value="ECO:0007669"/>
    <property type="project" value="UniProtKB-UniRule"/>
</dbReference>
<dbReference type="GO" id="GO:0009228">
    <property type="term" value="P:thiamine biosynthetic process"/>
    <property type="evidence" value="ECO:0007669"/>
    <property type="project" value="UniProtKB-KW"/>
</dbReference>
<dbReference type="GO" id="GO:0009229">
    <property type="term" value="P:thiamine diphosphate biosynthetic process"/>
    <property type="evidence" value="ECO:0007669"/>
    <property type="project" value="UniProtKB-UniRule"/>
</dbReference>
<dbReference type="CDD" id="cd01170">
    <property type="entry name" value="THZ_kinase"/>
    <property type="match status" value="1"/>
</dbReference>
<dbReference type="Gene3D" id="3.40.1190.20">
    <property type="match status" value="1"/>
</dbReference>
<dbReference type="HAMAP" id="MF_00228">
    <property type="entry name" value="Thz_kinase"/>
    <property type="match status" value="1"/>
</dbReference>
<dbReference type="InterPro" id="IPR000417">
    <property type="entry name" value="Hyethyz_kinase"/>
</dbReference>
<dbReference type="InterPro" id="IPR029056">
    <property type="entry name" value="Ribokinase-like"/>
</dbReference>
<dbReference type="NCBIfam" id="NF006830">
    <property type="entry name" value="PRK09355.1"/>
    <property type="match status" value="1"/>
</dbReference>
<dbReference type="Pfam" id="PF02110">
    <property type="entry name" value="HK"/>
    <property type="match status" value="1"/>
</dbReference>
<dbReference type="PIRSF" id="PIRSF000513">
    <property type="entry name" value="Thz_kinase"/>
    <property type="match status" value="1"/>
</dbReference>
<dbReference type="PRINTS" id="PR01099">
    <property type="entry name" value="HYETHTZKNASE"/>
</dbReference>
<dbReference type="SUPFAM" id="SSF53613">
    <property type="entry name" value="Ribokinase-like"/>
    <property type="match status" value="1"/>
</dbReference>
<keyword id="KW-0067">ATP-binding</keyword>
<keyword id="KW-0418">Kinase</keyword>
<keyword id="KW-0460">Magnesium</keyword>
<keyword id="KW-0479">Metal-binding</keyword>
<keyword id="KW-0547">Nucleotide-binding</keyword>
<keyword id="KW-1185">Reference proteome</keyword>
<keyword id="KW-0784">Thiamine biosynthesis</keyword>
<keyword id="KW-0808">Transferase</keyword>
<evidence type="ECO:0000255" key="1">
    <source>
        <dbReference type="HAMAP-Rule" id="MF_00228"/>
    </source>
</evidence>
<feature type="chain" id="PRO_1000021514" description="Hydroxyethylthiazole kinase">
    <location>
        <begin position="1"/>
        <end position="262"/>
    </location>
</feature>
<feature type="binding site" evidence="1">
    <location>
        <position position="41"/>
    </location>
    <ligand>
        <name>substrate</name>
    </ligand>
</feature>
<feature type="binding site" evidence="1">
    <location>
        <position position="117"/>
    </location>
    <ligand>
        <name>ATP</name>
        <dbReference type="ChEBI" id="CHEBI:30616"/>
    </ligand>
</feature>
<feature type="binding site" evidence="1">
    <location>
        <position position="163"/>
    </location>
    <ligand>
        <name>ATP</name>
        <dbReference type="ChEBI" id="CHEBI:30616"/>
    </ligand>
</feature>
<feature type="binding site" evidence="1">
    <location>
        <position position="190"/>
    </location>
    <ligand>
        <name>substrate</name>
    </ligand>
</feature>
<proteinExistence type="inferred from homology"/>
<sequence length="262" mass="27015">MKLALLDDLRTQNPIVFNISNFVTVQDVANGLNALGASPIMSEEPAEAGEMVGLAGGVCLNLGAFTQAQIQQIRTVGQQANAQHKPLVIDPVAVGAVQYRKQVATGLLADFHPDVIRGNAGEIAALADISWQAKGIDAGEGAGDLVAIAQACAQKLDCVVILSGPTDIITDGTRVVKVLNGTPLFQVHVGSGDMLSSIVAAFCAVTPDTFEAAQTACLVFAAIGQRVVQTVPDVGAGSFTVHLLDALQSTTVAQIEAVAAYE</sequence>
<comment type="function">
    <text evidence="1">Catalyzes the phosphorylation of the hydroxyl group of 4-methyl-5-beta-hydroxyethylthiazole (THZ).</text>
</comment>
<comment type="catalytic activity">
    <reaction evidence="1">
        <text>5-(2-hydroxyethyl)-4-methylthiazole + ATP = 4-methyl-5-(2-phosphooxyethyl)-thiazole + ADP + H(+)</text>
        <dbReference type="Rhea" id="RHEA:24212"/>
        <dbReference type="ChEBI" id="CHEBI:15378"/>
        <dbReference type="ChEBI" id="CHEBI:17957"/>
        <dbReference type="ChEBI" id="CHEBI:30616"/>
        <dbReference type="ChEBI" id="CHEBI:58296"/>
        <dbReference type="ChEBI" id="CHEBI:456216"/>
        <dbReference type="EC" id="2.7.1.50"/>
    </reaction>
</comment>
<comment type="cofactor">
    <cofactor evidence="1">
        <name>Mg(2+)</name>
        <dbReference type="ChEBI" id="CHEBI:18420"/>
    </cofactor>
</comment>
<comment type="pathway">
    <text evidence="1">Cofactor biosynthesis; thiamine diphosphate biosynthesis; 4-methyl-5-(2-phosphoethyl)-thiazole from 5-(2-hydroxyethyl)-4-methylthiazole: step 1/1.</text>
</comment>
<comment type="similarity">
    <text evidence="1">Belongs to the Thz kinase family.</text>
</comment>
<gene>
    <name evidence="1" type="primary">thiM</name>
    <name type="ordered locus">LVIS_2099</name>
</gene>
<reference key="1">
    <citation type="journal article" date="2006" name="Proc. Natl. Acad. Sci. U.S.A.">
        <title>Comparative genomics of the lactic acid bacteria.</title>
        <authorList>
            <person name="Makarova K.S."/>
            <person name="Slesarev A."/>
            <person name="Wolf Y.I."/>
            <person name="Sorokin A."/>
            <person name="Mirkin B."/>
            <person name="Koonin E.V."/>
            <person name="Pavlov A."/>
            <person name="Pavlova N."/>
            <person name="Karamychev V."/>
            <person name="Polouchine N."/>
            <person name="Shakhova V."/>
            <person name="Grigoriev I."/>
            <person name="Lou Y."/>
            <person name="Rohksar D."/>
            <person name="Lucas S."/>
            <person name="Huang K."/>
            <person name="Goodstein D.M."/>
            <person name="Hawkins T."/>
            <person name="Plengvidhya V."/>
            <person name="Welker D."/>
            <person name="Hughes J."/>
            <person name="Goh Y."/>
            <person name="Benson A."/>
            <person name="Baldwin K."/>
            <person name="Lee J.-H."/>
            <person name="Diaz-Muniz I."/>
            <person name="Dosti B."/>
            <person name="Smeianov V."/>
            <person name="Wechter W."/>
            <person name="Barabote R."/>
            <person name="Lorca G."/>
            <person name="Altermann E."/>
            <person name="Barrangou R."/>
            <person name="Ganesan B."/>
            <person name="Xie Y."/>
            <person name="Rawsthorne H."/>
            <person name="Tamir D."/>
            <person name="Parker C."/>
            <person name="Breidt F."/>
            <person name="Broadbent J.R."/>
            <person name="Hutkins R."/>
            <person name="O'Sullivan D."/>
            <person name="Steele J."/>
            <person name="Unlu G."/>
            <person name="Saier M.H. Jr."/>
            <person name="Klaenhammer T."/>
            <person name="Richardson P."/>
            <person name="Kozyavkin S."/>
            <person name="Weimer B.C."/>
            <person name="Mills D.A."/>
        </authorList>
    </citation>
    <scope>NUCLEOTIDE SEQUENCE [LARGE SCALE GENOMIC DNA]</scope>
    <source>
        <strain>ATCC 367 / BCRC 12310 / CIP 105137 / JCM 1170 / LMG 11437 / NCIMB 947 / NCTC 947</strain>
    </source>
</reference>
<accession>Q03NR9</accession>
<protein>
    <recommendedName>
        <fullName evidence="1">Hydroxyethylthiazole kinase</fullName>
        <ecNumber evidence="1">2.7.1.50</ecNumber>
    </recommendedName>
    <alternativeName>
        <fullName evidence="1">4-methyl-5-beta-hydroxyethylthiazole kinase</fullName>
        <shortName evidence="1">TH kinase</shortName>
        <shortName evidence="1">Thz kinase</shortName>
    </alternativeName>
</protein>